<gene>
    <name evidence="9" type="primary">mab-3</name>
    <name evidence="9" type="ORF">Y53C12B.5</name>
</gene>
<proteinExistence type="evidence at protein level"/>
<sequence>MLTEDPVSEICEAKAVDELAEQEKNYYCQRCLNHGELKPRKGHKPDCRYLKCPCRECTMVEQRRQLNNLLSKKKIHCTPATQTRDGKRVRDPHCARCSAHGVLVPLRGHKRTMCQFVTCECTLCTLVEHRRNLMAAQIKLRRSQQKSRDGKEPKRNSRRKSKDMDMEMMVVTATDGQKIIGTSASPSPSSTTDTMSPSLSMSPPCSPSPLLAQYTLTLAAPIPIYPPIPMNQQLISLQQQQFLMSIIQNMAPSIGQQAPLLPGISAGSVSSAAILNEFWSMYLKNYGLQA</sequence>
<reference key="1">
    <citation type="journal article" date="1998" name="Nature">
        <title>Evidence for evolutionary conservation of sex-determining genes.</title>
        <authorList>
            <person name="Raymond C.S."/>
            <person name="Shamu C.E."/>
            <person name="Shen M.M."/>
            <person name="Seifert K.J."/>
            <person name="Hirsch B."/>
            <person name="Hodgkin J."/>
            <person name="Zarkower D."/>
        </authorList>
    </citation>
    <scope>NUCLEOTIDE SEQUENCE [GENOMIC DNA] (ISOFORM A)</scope>
    <scope>FUNCTION</scope>
    <scope>TISSUE SPECIFICITY</scope>
    <scope>DEVELOPMENTAL STAGE</scope>
    <source>
        <strain>Bristol N2</strain>
    </source>
</reference>
<reference key="2">
    <citation type="journal article" date="1998" name="Science">
        <title>Genome sequence of the nematode C. elegans: a platform for investigating biology.</title>
        <authorList>
            <consortium name="The C. elegans sequencing consortium"/>
        </authorList>
    </citation>
    <scope>NUCLEOTIDE SEQUENCE [LARGE SCALE GENOMIC DNA]</scope>
    <source>
        <strain>Bristol N2</strain>
    </source>
</reference>
<reference key="3">
    <citation type="journal article" date="2008" name="Development">
        <title>dmd-3, a doublesex-related gene regulated by tra-1, governs sex-specific morphogenesis in C. elegans.</title>
        <authorList>
            <person name="Mason D.A."/>
            <person name="Rabinowitz J.S."/>
            <person name="Portman D.S."/>
        </authorList>
    </citation>
    <scope>FUNCTION</scope>
    <scope>TISSUE SPECIFICITY</scope>
    <scope>DEVELOPMENTAL STAGE</scope>
</reference>
<reference key="4">
    <citation type="journal article" date="2011" name="PLoS Genet.">
        <title>A bow-tie genetic architecture for morphogenesis suggested by a genome-wide RNAi screen in Caenorhabditis elegans.</title>
        <authorList>
            <person name="Nelson M.D."/>
            <person name="Zhou E."/>
            <person name="Kiontke K."/>
            <person name="Fradin H."/>
            <person name="Maldonado G."/>
            <person name="Martin D."/>
            <person name="Shah K."/>
            <person name="Fitch D.H."/>
        </authorList>
    </citation>
    <scope>FUNCTION</scope>
</reference>
<reference key="5">
    <citation type="journal article" date="2017" name="Mol. Cell">
        <title>LIN41 post-transcriptionally silences mRNAs by two distinct and position-dependent mechanisms.</title>
        <authorList>
            <person name="Aeschimann F."/>
            <person name="Kumari P."/>
            <person name="Bartake H."/>
            <person name="Gaidatzis D."/>
            <person name="Xu L."/>
            <person name="Ciosk R."/>
            <person name="Grosshans H."/>
        </authorList>
    </citation>
    <scope>REPRESSION BY LIN-41</scope>
</reference>
<reference key="6">
    <citation type="journal article" date="2019" name="Elife">
        <title>The Makorin lep-2 and the lncRNA lep-5 regulate lin-28 to schedule sexual maturation of the C. elegans nervous system.</title>
        <authorList>
            <person name="Lawson H."/>
            <person name="Vuong E."/>
            <person name="Miller R.M."/>
            <person name="Kiontke K."/>
            <person name="Fitch D.H."/>
            <person name="Portman D.S."/>
        </authorList>
    </citation>
    <scope>DEVELOPMENTAL STAGE</scope>
</reference>
<name>MAB3_CAEEL</name>
<accession>O18214</accession>
<accession>Q8I0Z0</accession>
<comment type="function">
    <text evidence="3 4 7">Transcription factor which binds the DNA motif 5'-[CGA][TCA][TA]ACAATGT[AT][TGA]C-3', probably as a monomer (PubMed:9490411). Acts partially redundantly with the transcription factor dmd-3 to coordinate tail tip cell fusion and retraction and thereby regulate male tail tip morphogenesis (PubMed:18550714, PubMed:21408209). Promotes male-specific development of two tissues, the peripheral nervous system and the intestine (PubMed:9490411). In the peripheral nervous system, directs differentiation of sensory ray neuroblasts into peripheral sense organs (PubMed:9490411). In the intestine, causes repression of vitellogenin gene transcription (PubMed:9490411).</text>
</comment>
<comment type="interaction">
    <interactant intactId="EBI-2420993">
        <id>O18214</id>
    </interactant>
    <interactant intactId="EBI-317870">
        <id>Q10666</id>
        <label>pop-1</label>
    </interactant>
    <organismsDiffer>false</organismsDiffer>
    <experiments>3</experiments>
</comment>
<comment type="subcellular location">
    <subcellularLocation>
        <location evidence="1">Nucleus</location>
    </subcellularLocation>
</comment>
<comment type="alternative products">
    <event type="alternative splicing"/>
    <isoform>
        <id>O18214-1</id>
        <name evidence="9">a</name>
        <sequence type="displayed"/>
    </isoform>
    <isoform>
        <id>O18214-3</id>
        <name evidence="10">b</name>
        <sequence type="described" ref="VSP_060330"/>
    </isoform>
</comment>
<comment type="tissue specificity">
    <text evidence="3 7">Expression is undetectable in hermaphrodites, but persists in males (PubMed:9490411). In males, expressed in cells of the tail tip (PubMed:18550714).</text>
</comment>
<comment type="developmental stage">
    <text evidence="3 6 7">Expressed in late larvae of both sexes. In the fourth larval stage, expression is approximately six-fold higher in males than in hermaphrodites. Expressed in ADF chemosensory neurons in males from the L4 larval stage (PubMed:31264582). Expressed in cells of the male tail tip from the L4 larval stage (PubMed:18550714). Not expressed in cells of the hermaphrodite tail tip at any developmental stage (PubMed:18550714).</text>
</comment>
<comment type="induction">
    <text evidence="3 5">Negatively regulated by lin-41 which causes degradation of the mRNA encoding this protein.</text>
</comment>
<organism>
    <name type="scientific">Caenorhabditis elegans</name>
    <dbReference type="NCBI Taxonomy" id="6239"/>
    <lineage>
        <taxon>Eukaryota</taxon>
        <taxon>Metazoa</taxon>
        <taxon>Ecdysozoa</taxon>
        <taxon>Nematoda</taxon>
        <taxon>Chromadorea</taxon>
        <taxon>Rhabditida</taxon>
        <taxon>Rhabditina</taxon>
        <taxon>Rhabditomorpha</taxon>
        <taxon>Rhabditoidea</taxon>
        <taxon>Rhabditidae</taxon>
        <taxon>Peloderinae</taxon>
        <taxon>Caenorhabditis</taxon>
    </lineage>
</organism>
<keyword id="KW-0025">Alternative splicing</keyword>
<keyword id="KW-0217">Developmental protein</keyword>
<keyword id="KW-0221">Differentiation</keyword>
<keyword id="KW-0238">DNA-binding</keyword>
<keyword id="KW-0479">Metal-binding</keyword>
<keyword id="KW-0539">Nucleus</keyword>
<keyword id="KW-1185">Reference proteome</keyword>
<keyword id="KW-0677">Repeat</keyword>
<keyword id="KW-0726">Sexual differentiation</keyword>
<keyword id="KW-0862">Zinc</keyword>
<evidence type="ECO:0000255" key="1">
    <source>
        <dbReference type="PROSITE-ProRule" id="PRU00070"/>
    </source>
</evidence>
<evidence type="ECO:0000256" key="2">
    <source>
        <dbReference type="SAM" id="MobiDB-lite"/>
    </source>
</evidence>
<evidence type="ECO:0000269" key="3">
    <source>
    </source>
</evidence>
<evidence type="ECO:0000269" key="4">
    <source>
    </source>
</evidence>
<evidence type="ECO:0000269" key="5">
    <source>
    </source>
</evidence>
<evidence type="ECO:0000269" key="6">
    <source>
    </source>
</evidence>
<evidence type="ECO:0000269" key="7">
    <source>
    </source>
</evidence>
<evidence type="ECO:0000305" key="8"/>
<evidence type="ECO:0000312" key="9">
    <source>
        <dbReference type="WormBase" id="Y53C12B.5a"/>
    </source>
</evidence>
<evidence type="ECO:0000312" key="10">
    <source>
        <dbReference type="WormBase" id="Y53C12B.5b"/>
    </source>
</evidence>
<feature type="chain" id="PRO_0000207051" description="Protein male abnormal 3">
    <location>
        <begin position="1"/>
        <end position="290"/>
    </location>
</feature>
<feature type="DNA-binding region" description="DM 1" evidence="1">
    <location>
        <begin position="28"/>
        <end position="74"/>
    </location>
</feature>
<feature type="DNA-binding region" description="DM 2" evidence="1">
    <location>
        <begin position="94"/>
        <end position="142"/>
    </location>
</feature>
<feature type="region of interest" description="Disordered" evidence="2">
    <location>
        <begin position="139"/>
        <end position="167"/>
    </location>
</feature>
<feature type="region of interest" description="Disordered" evidence="2">
    <location>
        <begin position="179"/>
        <end position="202"/>
    </location>
</feature>
<feature type="compositionally biased region" description="Basic and acidic residues" evidence="2">
    <location>
        <begin position="146"/>
        <end position="155"/>
    </location>
</feature>
<feature type="compositionally biased region" description="Low complexity" evidence="2">
    <location>
        <begin position="182"/>
        <end position="202"/>
    </location>
</feature>
<feature type="splice variant" id="VSP_060330" description="In isoform b." evidence="8">
    <location>
        <begin position="1"/>
        <end position="133"/>
    </location>
</feature>
<dbReference type="EMBL" id="AF022388">
    <property type="protein sequence ID" value="AAC38956.1"/>
    <property type="molecule type" value="Genomic_DNA"/>
</dbReference>
<dbReference type="EMBL" id="BX284602">
    <property type="protein sequence ID" value="CAB16489.1"/>
    <property type="molecule type" value="Genomic_DNA"/>
</dbReference>
<dbReference type="EMBL" id="BX284602">
    <property type="protein sequence ID" value="CAD59170.2"/>
    <property type="molecule type" value="Genomic_DNA"/>
</dbReference>
<dbReference type="PIR" id="T27132">
    <property type="entry name" value="T27132"/>
</dbReference>
<dbReference type="RefSeq" id="NP_001022464.1">
    <molecule id="O18214-1"/>
    <property type="nucleotide sequence ID" value="NM_001027293.2"/>
</dbReference>
<dbReference type="RefSeq" id="NP_001379328.1">
    <molecule id="O18214-3"/>
    <property type="nucleotide sequence ID" value="NM_001393163.1"/>
</dbReference>
<dbReference type="RefSeq" id="NP_871909.2">
    <property type="nucleotide sequence ID" value="NM_182109.4"/>
</dbReference>
<dbReference type="SMR" id="O18214"/>
<dbReference type="BioGRID" id="39855">
    <property type="interactions" value="55"/>
</dbReference>
<dbReference type="FunCoup" id="O18214">
    <property type="interactions" value="365"/>
</dbReference>
<dbReference type="IntAct" id="O18214">
    <property type="interactions" value="55"/>
</dbReference>
<dbReference type="STRING" id="6239.Y53C12B.5a.1"/>
<dbReference type="PaxDb" id="6239-Y53C12B.5a"/>
<dbReference type="EnsemblMetazoa" id="Y53C12B.5a.1">
    <molecule id="O18214-1"/>
    <property type="protein sequence ID" value="Y53C12B.5a.1"/>
    <property type="gene ID" value="WBGene00003100"/>
</dbReference>
<dbReference type="EnsemblMetazoa" id="Y53C12B.5b.1">
    <molecule id="O18214-3"/>
    <property type="protein sequence ID" value="Y53C12B.5b.1"/>
    <property type="gene ID" value="WBGene00003100"/>
</dbReference>
<dbReference type="EnsemblMetazoa" id="Y53C12B.5b.2">
    <molecule id="O18214-3"/>
    <property type="protein sequence ID" value="Y53C12B.5b.2"/>
    <property type="gene ID" value="WBGene00003100"/>
</dbReference>
<dbReference type="GeneID" id="174533"/>
<dbReference type="KEGG" id="cel:CELE_Y53C12B.5"/>
<dbReference type="UCSC" id="Y53C12B.5a">
    <molecule id="O18214-1"/>
    <property type="organism name" value="c. elegans"/>
</dbReference>
<dbReference type="AGR" id="WB:WBGene00003100"/>
<dbReference type="CTD" id="174533"/>
<dbReference type="WormBase" id="Y53C12B.5a">
    <molecule id="O18214-1"/>
    <property type="protein sequence ID" value="CE14902"/>
    <property type="gene ID" value="WBGene00003100"/>
    <property type="gene designation" value="mab-3"/>
</dbReference>
<dbReference type="WormBase" id="Y53C12B.5b">
    <molecule id="O18214-3"/>
    <property type="protein sequence ID" value="CE51560"/>
    <property type="gene ID" value="WBGene00003100"/>
    <property type="gene designation" value="mab-3"/>
</dbReference>
<dbReference type="eggNOG" id="KOG3815">
    <property type="taxonomic scope" value="Eukaryota"/>
</dbReference>
<dbReference type="HOGENOM" id="CLU_934575_0_0_1"/>
<dbReference type="InParanoid" id="O18214"/>
<dbReference type="OMA" id="RCLNHGE"/>
<dbReference type="OrthoDB" id="5842031at2759"/>
<dbReference type="SignaLink" id="O18214"/>
<dbReference type="PRO" id="PR:O18214"/>
<dbReference type="Proteomes" id="UP000001940">
    <property type="component" value="Chromosome II"/>
</dbReference>
<dbReference type="Bgee" id="WBGene00003100">
    <property type="expression patterns" value="Expressed in adult organism and 1 other cell type or tissue"/>
</dbReference>
<dbReference type="GO" id="GO:0005634">
    <property type="term" value="C:nucleus"/>
    <property type="evidence" value="ECO:0000318"/>
    <property type="project" value="GO_Central"/>
</dbReference>
<dbReference type="GO" id="GO:0000981">
    <property type="term" value="F:DNA-binding transcription factor activity, RNA polymerase II-specific"/>
    <property type="evidence" value="ECO:0000318"/>
    <property type="project" value="GO_Central"/>
</dbReference>
<dbReference type="GO" id="GO:0046872">
    <property type="term" value="F:metal ion binding"/>
    <property type="evidence" value="ECO:0007669"/>
    <property type="project" value="UniProtKB-KW"/>
</dbReference>
<dbReference type="GO" id="GO:0000978">
    <property type="term" value="F:RNA polymerase II cis-regulatory region sequence-specific DNA binding"/>
    <property type="evidence" value="ECO:0000314"/>
    <property type="project" value="WormBase"/>
</dbReference>
<dbReference type="GO" id="GO:0000977">
    <property type="term" value="F:RNA polymerase II transcription regulatory region sequence-specific DNA binding"/>
    <property type="evidence" value="ECO:0000314"/>
    <property type="project" value="WormBase"/>
</dbReference>
<dbReference type="GO" id="GO:0030154">
    <property type="term" value="P:cell differentiation"/>
    <property type="evidence" value="ECO:0007669"/>
    <property type="project" value="UniProtKB-KW"/>
</dbReference>
<dbReference type="GO" id="GO:0000122">
    <property type="term" value="P:negative regulation of transcription by RNA polymerase II"/>
    <property type="evidence" value="ECO:0000315"/>
    <property type="project" value="WormBase"/>
</dbReference>
<dbReference type="GO" id="GO:0045138">
    <property type="term" value="P:nematode male tail tip morphogenesis"/>
    <property type="evidence" value="ECO:0000315"/>
    <property type="project" value="WormBase"/>
</dbReference>
<dbReference type="GO" id="GO:0110039">
    <property type="term" value="P:positive regulation of nematode male tail tip morphogenesis"/>
    <property type="evidence" value="ECO:0000315"/>
    <property type="project" value="UniProtKB"/>
</dbReference>
<dbReference type="GO" id="GO:0045944">
    <property type="term" value="P:positive regulation of transcription by RNA polymerase II"/>
    <property type="evidence" value="ECO:0000316"/>
    <property type="project" value="WormBase"/>
</dbReference>
<dbReference type="GO" id="GO:0006357">
    <property type="term" value="P:regulation of transcription by RNA polymerase II"/>
    <property type="evidence" value="ECO:0000318"/>
    <property type="project" value="GO_Central"/>
</dbReference>
<dbReference type="GO" id="GO:0007548">
    <property type="term" value="P:sex differentiation"/>
    <property type="evidence" value="ECO:0000315"/>
    <property type="project" value="WormBase"/>
</dbReference>
<dbReference type="FunFam" id="4.10.1040.10:FF:000001">
    <property type="entry name" value="doublesex- and mab-3-related transcription factor 1"/>
    <property type="match status" value="1"/>
</dbReference>
<dbReference type="Gene3D" id="4.10.1040.10">
    <property type="entry name" value="DM DNA-binding domain"/>
    <property type="match status" value="2"/>
</dbReference>
<dbReference type="InterPro" id="IPR001275">
    <property type="entry name" value="DM_DNA-bd"/>
</dbReference>
<dbReference type="InterPro" id="IPR036407">
    <property type="entry name" value="DM_DNA-bd_sf"/>
</dbReference>
<dbReference type="InterPro" id="IPR026607">
    <property type="entry name" value="DMRT"/>
</dbReference>
<dbReference type="PANTHER" id="PTHR12322">
    <property type="entry name" value="DOUBLESEX AND MAB-3 RELATED TRANSCRIPTION FACTOR DMRT"/>
    <property type="match status" value="1"/>
</dbReference>
<dbReference type="PANTHER" id="PTHR12322:SF125">
    <property type="entry name" value="PROTEIN MALE ABNORMAL 3"/>
    <property type="match status" value="1"/>
</dbReference>
<dbReference type="Pfam" id="PF00751">
    <property type="entry name" value="DM"/>
    <property type="match status" value="2"/>
</dbReference>
<dbReference type="SMART" id="SM00301">
    <property type="entry name" value="DM"/>
    <property type="match status" value="2"/>
</dbReference>
<dbReference type="SUPFAM" id="SSF82927">
    <property type="entry name" value="Cysteine-rich DNA binding domain, (DM domain)"/>
    <property type="match status" value="2"/>
</dbReference>
<dbReference type="PROSITE" id="PS40000">
    <property type="entry name" value="DM_1"/>
    <property type="match status" value="2"/>
</dbReference>
<dbReference type="PROSITE" id="PS50809">
    <property type="entry name" value="DM_2"/>
    <property type="match status" value="2"/>
</dbReference>
<protein>
    <recommendedName>
        <fullName>Protein male abnormal 3</fullName>
    </recommendedName>
</protein>